<keyword id="KW-0119">Carbohydrate metabolism</keyword>
<keyword id="KW-0136">Cellulose degradation</keyword>
<keyword id="KW-0325">Glycoprotein</keyword>
<keyword id="KW-0326">Glycosidase</keyword>
<keyword id="KW-0378">Hydrolase</keyword>
<keyword id="KW-0624">Polysaccharide degradation</keyword>
<keyword id="KW-1185">Reference proteome</keyword>
<keyword id="KW-0964">Secreted</keyword>
<keyword id="KW-0732">Signal</keyword>
<evidence type="ECO:0000255" key="1"/>
<evidence type="ECO:0000269" key="2">
    <source>
    </source>
</evidence>
<evidence type="ECO:0000303" key="3">
    <source>
    </source>
</evidence>
<evidence type="ECO:0000305" key="4"/>
<evidence type="ECO:0000312" key="5">
    <source>
        <dbReference type="EMBL" id="BAD20464.1"/>
    </source>
</evidence>
<reference evidence="4 5" key="1">
    <citation type="journal article" date="2004" name="J. Biol. Chem.">
        <title>Unique catabolic pathway of glycosphingolipids in a hydrozoan, Hydra magnipapillata, involving endoglycoceramidase.</title>
        <authorList>
            <person name="Horibata Y."/>
            <person name="Sakaguchi K."/>
            <person name="Okino N."/>
            <person name="Iida H."/>
            <person name="Inagaki M."/>
            <person name="Fujisawa T."/>
            <person name="Hama Y."/>
            <person name="Ito M."/>
        </authorList>
    </citation>
    <scope>NUCLEOTIDE SEQUENCE [MRNA]</scope>
    <scope>FUNCTION</scope>
    <scope>CATALYTIC ACTIVITY</scope>
    <scope>ACTIVITY REGULATION</scope>
    <scope>BIOPHYSICOCHEMICAL PROPERTIES</scope>
    <scope>SUBCELLULAR LOCATION</scope>
    <scope>TISSUE SPECIFICITY</scope>
    <source>
        <strain evidence="2">105</strain>
    </source>
</reference>
<dbReference type="EC" id="3.2.1.123"/>
<dbReference type="EMBL" id="AB179748">
    <property type="protein sequence ID" value="BAD20464.1"/>
    <property type="molecule type" value="mRNA"/>
</dbReference>
<dbReference type="SMR" id="Q6L6S1"/>
<dbReference type="CAZy" id="GH5">
    <property type="family name" value="Glycoside Hydrolase Family 5"/>
</dbReference>
<dbReference type="OrthoDB" id="1887033at2759"/>
<dbReference type="BioCyc" id="MetaCyc:MONOMER-18387"/>
<dbReference type="Proteomes" id="UP000694840">
    <property type="component" value="Unplaced"/>
</dbReference>
<dbReference type="GO" id="GO:0005576">
    <property type="term" value="C:extracellular region"/>
    <property type="evidence" value="ECO:0000314"/>
    <property type="project" value="UniProtKB"/>
</dbReference>
<dbReference type="GO" id="GO:0016020">
    <property type="term" value="C:membrane"/>
    <property type="evidence" value="ECO:0007669"/>
    <property type="project" value="GOC"/>
</dbReference>
<dbReference type="GO" id="GO:0047876">
    <property type="term" value="F:endoglycosylceramidase activity"/>
    <property type="evidence" value="ECO:0000314"/>
    <property type="project" value="UniProtKB"/>
</dbReference>
<dbReference type="GO" id="GO:0030245">
    <property type="term" value="P:cellulose catabolic process"/>
    <property type="evidence" value="ECO:0007669"/>
    <property type="project" value="UniProtKB-KW"/>
</dbReference>
<dbReference type="GO" id="GO:0046479">
    <property type="term" value="P:glycosphingolipid catabolic process"/>
    <property type="evidence" value="ECO:0000314"/>
    <property type="project" value="UniProtKB"/>
</dbReference>
<dbReference type="Gene3D" id="3.20.20.80">
    <property type="entry name" value="Glycosidases"/>
    <property type="match status" value="1"/>
</dbReference>
<dbReference type="Gene3D" id="2.60.40.1180">
    <property type="entry name" value="Golgi alpha-mannosidase II"/>
    <property type="match status" value="1"/>
</dbReference>
<dbReference type="InterPro" id="IPR041036">
    <property type="entry name" value="GH5_C"/>
</dbReference>
<dbReference type="InterPro" id="IPR001547">
    <property type="entry name" value="Glyco_hydro_5"/>
</dbReference>
<dbReference type="InterPro" id="IPR018087">
    <property type="entry name" value="Glyco_hydro_5_CS"/>
</dbReference>
<dbReference type="InterPro" id="IPR013780">
    <property type="entry name" value="Glyco_hydro_b"/>
</dbReference>
<dbReference type="InterPro" id="IPR017853">
    <property type="entry name" value="Glycoside_hydrolase_SF"/>
</dbReference>
<dbReference type="InterPro" id="IPR052066">
    <property type="entry name" value="Glycosphingolipid_Hydrolases"/>
</dbReference>
<dbReference type="PANTHER" id="PTHR31308">
    <property type="match status" value="1"/>
</dbReference>
<dbReference type="PANTHER" id="PTHR31308:SF3">
    <property type="entry name" value="ENDOGLYCOCERAMIDASE"/>
    <property type="match status" value="1"/>
</dbReference>
<dbReference type="Pfam" id="PF00150">
    <property type="entry name" value="Cellulase"/>
    <property type="match status" value="1"/>
</dbReference>
<dbReference type="Pfam" id="PF18564">
    <property type="entry name" value="Glyco_hydro_5_C"/>
    <property type="match status" value="1"/>
</dbReference>
<dbReference type="SUPFAM" id="SSF51445">
    <property type="entry name" value="(Trans)glycosidases"/>
    <property type="match status" value="1"/>
</dbReference>
<dbReference type="PROSITE" id="PS00659">
    <property type="entry name" value="GLYCOSYL_HYDROL_F5"/>
    <property type="match status" value="1"/>
</dbReference>
<sequence length="517" mass="59685">MISVALIILFLAKVISGKSDDFISVNPETNMLIDGYGRERFFHGTNVVVKHFPFHPETTGFNKDTFSEDDMKILQKFGLNSIRLGMMLPGYVPKREEYNETYIKVIQSIVTTAAKYGIYTLLDMHQDVFSPKFCVEGMPDWIVNTQGAKDFPMPLHKPFNLDPKTGYPYPEDCAKFSWADYYFTEAAGQAFQNLYDNVDGLRDEWAQFWKKTADVFKEEPSVIGYELINEPFCGNVFKHPTLLIPGVADYLNLQPTYDALQKAIRQVDEEHNIFFEGVTWDFFEVGFTEVPGGKQYQNRSVLSYHYYEPPDFSKKLNFEARLLDLKRLKCGGFLTEMFTVGTDFNSMFEMFDLCDKFKQSWHGWMYKSYGCIEQNLGCLNMSSPGKESIQIANTSRTYPQAVAGRTQSYAFDIKTKVFTLVYETVGSCKSGRTIVYFNKNLHYPNGYRYEINPNFKVTPSENEYFLYLDEVNKVPNTVVTFKLFPLSFTDSEDIHPVTVMGDKHLSENHNENEKKKK</sequence>
<feature type="signal peptide" evidence="1">
    <location>
        <begin position="1"/>
        <end position="17"/>
    </location>
</feature>
<feature type="chain" id="PRO_0000390382" description="Endoglycoceramidase" evidence="1">
    <location>
        <begin position="18"/>
        <end position="517"/>
    </location>
</feature>
<feature type="active site" description="Proton donor" evidence="1">
    <location>
        <position position="230"/>
    </location>
</feature>
<feature type="glycosylation site" description="N-linked (GlcNAc...) asparagine" evidence="1">
    <location>
        <position position="99"/>
    </location>
</feature>
<feature type="glycosylation site" description="N-linked (GlcNAc...) asparagine" evidence="1">
    <location>
        <position position="298"/>
    </location>
</feature>
<feature type="glycosylation site" description="N-linked (GlcNAc...) asparagine" evidence="1">
    <location>
        <position position="380"/>
    </location>
</feature>
<feature type="glycosylation site" description="N-linked (GlcNAc...) asparagine" evidence="1">
    <location>
        <position position="393"/>
    </location>
</feature>
<proteinExistence type="evidence at protein level"/>
<accession>Q6L6S1</accession>
<organism>
    <name type="scientific">Hydra vulgaris</name>
    <name type="common">Hydra</name>
    <name type="synonym">Hydra attenuata</name>
    <dbReference type="NCBI Taxonomy" id="6087"/>
    <lineage>
        <taxon>Eukaryota</taxon>
        <taxon>Metazoa</taxon>
        <taxon>Cnidaria</taxon>
        <taxon>Hydrozoa</taxon>
        <taxon>Hydroidolina</taxon>
        <taxon>Anthoathecata</taxon>
        <taxon>Aplanulata</taxon>
        <taxon>Hydridae</taxon>
        <taxon>Hydra</taxon>
    </lineage>
</organism>
<name>EGCSE_HYDVU</name>
<comment type="function">
    <text evidence="2">Hydrolysis of the glycosidic linkage between oligosaccharides and ceramides of glycosphingolipids, optimal substrates appear to be the glycosphingolipids with a gangliotetraose structure.</text>
</comment>
<comment type="catalytic activity">
    <reaction evidence="2">
        <text>an oligoglycosyl-(1-&gt;4)-beta-D-glucosyl-(1&lt;-&gt;1)-ceramide + H2O = an oligoglycosyl-(1-&gt;4)-D-glucose + an N-acyl-sphingoid base</text>
        <dbReference type="Rhea" id="RHEA:22288"/>
        <dbReference type="ChEBI" id="CHEBI:15377"/>
        <dbReference type="ChEBI" id="CHEBI:83273"/>
        <dbReference type="ChEBI" id="CHEBI:136875"/>
        <dbReference type="ChEBI" id="CHEBI:156536"/>
        <dbReference type="EC" id="3.2.1.123"/>
    </reaction>
</comment>
<comment type="activity regulation">
    <text evidence="2">Cu(2+), zinc, manganese, calcium, magnesium and EDTA have no significant effects on enzyme activity. Enzyme requires presence of detergents such as Triton X-100 and Lubrol PX for the hydrolysis of glycosphingolipids. Taurodeoxycholate strongly inhibits the enzyme activity.</text>
</comment>
<comment type="biophysicochemical properties">
    <phDependence>
        <text evidence="2">Optimum pH is 3.0-4.0. Highly stable at acidic pH.</text>
    </phDependence>
</comment>
<comment type="subcellular location">
    <subcellularLocation>
        <location evidence="2">Secreted</location>
    </subcellularLocation>
    <text evidence="2">Released from digestive cells into the gastric cavity, and eventually into the surrounding medium, during the digestive process.</text>
</comment>
<comment type="tissue specificity">
    <text evidence="2">Expressed uniformly in digestive cells, tentacles and peduncle regions suggesting expression in the endoderm throughout the whole body (at protein level).</text>
</comment>
<comment type="similarity">
    <text evidence="1">Belongs to the glycosyl hydrolase 5 (cellulase A) family.</text>
</comment>
<protein>
    <recommendedName>
        <fullName evidence="5">Endoglycoceramidase</fullName>
        <shortName evidence="3">EGCase</shortName>
        <ecNumber>3.2.1.123</ecNumber>
    </recommendedName>
    <alternativeName>
        <fullName evidence="3">Glycosphingolipid-specific enzyme</fullName>
        <shortName evidence="3">GSL-specific enzyme</shortName>
    </alternativeName>
</protein>